<protein>
    <recommendedName>
        <fullName>Hyaluronidase PH-20</fullName>
        <shortName>Hyal-PH20</shortName>
        <ecNumber>3.2.1.35</ecNumber>
    </recommendedName>
    <alternativeName>
        <fullName>Hyaluronoglucosaminidase PH-20</fullName>
    </alternativeName>
    <alternativeName>
        <fullName>Sperm adhesion molecule 1</fullName>
    </alternativeName>
    <alternativeName>
        <fullName>Sperm surface protein PH-20</fullName>
    </alternativeName>
</protein>
<proteinExistence type="evidence at transcript level"/>
<accession>P38566</accession>
<gene>
    <name type="primary">SPAM1</name>
    <name type="synonym">PH20</name>
</gene>
<evidence type="ECO:0000250" key="1"/>
<evidence type="ECO:0000255" key="2"/>
<evidence type="ECO:0000305" key="3"/>
<reference key="1">
    <citation type="submission" date="1994-05" db="EMBL/GenBank/DDBJ databases">
        <title>The nucleic acid sequence of rabbit PH-20 cDNA.</title>
        <authorList>
            <person name="Andrews J.B."/>
            <person name="Holland M.K."/>
        </authorList>
    </citation>
    <scope>NUCLEOTIDE SEQUENCE [MRNA]</scope>
    <source>
        <tissue>Testis</tissue>
    </source>
</reference>
<sequence>MGVLKFKHIFFGSAVELSGVFQIVFIFLLIPCCLTANFRAPPVIPNVPFLWAWNAPTEFCLGKSGEPLDMSLFSLFGSPRKNKTGQGITIFYVDRLGYYPYIDPHTGAIVHGRIPQLGPLQQHLTKLRQEILYYMPKDNVGLAVIDWEEWLPTWLRNWKPKDIYRIKSIELVKSQHPQYNHSYATEKAKRDFEKAGKDFMEETLKLGRLLRPNHLWGYYLFPDCYNHHYDKPNLYKGSCFDIEKKRNDDLSWLWKESTALFPSVYLTSRARSATALSKLYVVRNRVHEAIRVSKIPDDKSPLPNFVYTRLVFTDQIFQFLSHHDLVYTIGEIVALGASGIVVWGSQSLARSMKSCLHLDNYMKTILNPYLINVTLAAKMCNQVLCQEQGVCTRKNWNPNDYLHLNPGNFAIQLGSNGTYKVDGKPTLTDLEQFSKNFQCSCYTNLNCKERTDMNNVRTVNVCAVENVCIDTNVGPQAVTYAPKEKKDVAHILSNTTSINSSTTMSLPFPRKHVSGCLLVLCMYSQYLNICYRLVAIGIQHGYYLK</sequence>
<keyword id="KW-0130">Cell adhesion</keyword>
<keyword id="KW-1003">Cell membrane</keyword>
<keyword id="KW-1015">Disulfide bond</keyword>
<keyword id="KW-0325">Glycoprotein</keyword>
<keyword id="KW-0326">Glycosidase</keyword>
<keyword id="KW-0336">GPI-anchor</keyword>
<keyword id="KW-0378">Hydrolase</keyword>
<keyword id="KW-0449">Lipoprotein</keyword>
<keyword id="KW-0472">Membrane</keyword>
<keyword id="KW-1185">Reference proteome</keyword>
<keyword id="KW-0732">Signal</keyword>
<dbReference type="EC" id="3.2.1.35"/>
<dbReference type="EMBL" id="U09183">
    <property type="protein sequence ID" value="AAA88913.1"/>
    <property type="molecule type" value="mRNA"/>
</dbReference>
<dbReference type="RefSeq" id="NP_001076141.1">
    <property type="nucleotide sequence ID" value="NM_001082672.1"/>
</dbReference>
<dbReference type="SMR" id="P38566"/>
<dbReference type="FunCoup" id="P38566">
    <property type="interactions" value="23"/>
</dbReference>
<dbReference type="STRING" id="9986.ENSOCUP00000009842"/>
<dbReference type="CAZy" id="GH56">
    <property type="family name" value="Glycoside Hydrolase Family 56"/>
</dbReference>
<dbReference type="GlyCosmos" id="P38566">
    <property type="glycosylation" value="3 sites, No reported glycans"/>
</dbReference>
<dbReference type="GeneID" id="100009391"/>
<dbReference type="KEGG" id="ocu:100009391"/>
<dbReference type="CTD" id="6677"/>
<dbReference type="InParanoid" id="P38566"/>
<dbReference type="OrthoDB" id="5796153at2759"/>
<dbReference type="Proteomes" id="UP000001811">
    <property type="component" value="Unplaced"/>
</dbReference>
<dbReference type="GO" id="GO:0001669">
    <property type="term" value="C:acrosomal vesicle"/>
    <property type="evidence" value="ECO:0007669"/>
    <property type="project" value="TreeGrafter"/>
</dbReference>
<dbReference type="GO" id="GO:0005886">
    <property type="term" value="C:plasma membrane"/>
    <property type="evidence" value="ECO:0007669"/>
    <property type="project" value="UniProtKB-SubCell"/>
</dbReference>
<dbReference type="GO" id="GO:0098552">
    <property type="term" value="C:side of membrane"/>
    <property type="evidence" value="ECO:0007669"/>
    <property type="project" value="UniProtKB-KW"/>
</dbReference>
<dbReference type="GO" id="GO:0004415">
    <property type="term" value="F:hyalurononglucosaminidase activity"/>
    <property type="evidence" value="ECO:0007669"/>
    <property type="project" value="UniProtKB-EC"/>
</dbReference>
<dbReference type="GO" id="GO:0005975">
    <property type="term" value="P:carbohydrate metabolic process"/>
    <property type="evidence" value="ECO:0007669"/>
    <property type="project" value="InterPro"/>
</dbReference>
<dbReference type="GO" id="GO:0007155">
    <property type="term" value="P:cell adhesion"/>
    <property type="evidence" value="ECO:0007669"/>
    <property type="project" value="UniProtKB-KW"/>
</dbReference>
<dbReference type="GO" id="GO:0007342">
    <property type="term" value="P:fusion of sperm to egg plasma membrane involved in single fertilization"/>
    <property type="evidence" value="ECO:0007669"/>
    <property type="project" value="InterPro"/>
</dbReference>
<dbReference type="GO" id="GO:0030214">
    <property type="term" value="P:hyaluronan catabolic process"/>
    <property type="evidence" value="ECO:0007669"/>
    <property type="project" value="TreeGrafter"/>
</dbReference>
<dbReference type="FunFam" id="3.20.20.70:FF:000065">
    <property type="entry name" value="Hyaluronidase"/>
    <property type="match status" value="1"/>
</dbReference>
<dbReference type="Gene3D" id="3.20.20.70">
    <property type="entry name" value="Aldolase class I"/>
    <property type="match status" value="1"/>
</dbReference>
<dbReference type="InterPro" id="IPR013785">
    <property type="entry name" value="Aldolase_TIM"/>
</dbReference>
<dbReference type="InterPro" id="IPR017853">
    <property type="entry name" value="Glycoside_hydrolase_SF"/>
</dbReference>
<dbReference type="InterPro" id="IPR018155">
    <property type="entry name" value="Hyaluronidase"/>
</dbReference>
<dbReference type="InterPro" id="IPR001439">
    <property type="entry name" value="Hyaluronidase_PH20/Hyal5"/>
</dbReference>
<dbReference type="PANTHER" id="PTHR11769">
    <property type="entry name" value="HYALURONIDASE"/>
    <property type="match status" value="1"/>
</dbReference>
<dbReference type="PANTHER" id="PTHR11769:SF20">
    <property type="entry name" value="HYALURONIDASE PH-20"/>
    <property type="match status" value="1"/>
</dbReference>
<dbReference type="Pfam" id="PF01630">
    <property type="entry name" value="Glyco_hydro_56"/>
    <property type="match status" value="1"/>
</dbReference>
<dbReference type="PIRSF" id="PIRSF038193">
    <property type="entry name" value="Hyaluronidase"/>
    <property type="match status" value="1"/>
</dbReference>
<dbReference type="PIRSF" id="PIRSF500773">
    <property type="entry name" value="Hyaluronidase_PH20_Hyal5"/>
    <property type="match status" value="1"/>
</dbReference>
<dbReference type="PRINTS" id="PR00846">
    <property type="entry name" value="GLHYDRLASE56"/>
</dbReference>
<dbReference type="PRINTS" id="PR00848">
    <property type="entry name" value="SPERMPH20"/>
</dbReference>
<dbReference type="SUPFAM" id="SSF51445">
    <property type="entry name" value="(Trans)glycosidases"/>
    <property type="match status" value="1"/>
</dbReference>
<name>HYALP_RABIT</name>
<feature type="signal peptide" evidence="1">
    <location>
        <begin position="1"/>
        <end position="35"/>
    </location>
</feature>
<feature type="chain" id="PRO_0000012095" description="Hyaluronidase PH-20">
    <location>
        <begin position="36"/>
        <end status="unknown"/>
    </location>
</feature>
<feature type="propeptide" id="PRO_0000012096" description="Removed in mature form" evidence="2">
    <location>
        <begin status="unknown"/>
        <end position="545"/>
    </location>
</feature>
<feature type="active site" description="Proton donor" evidence="1">
    <location>
        <position position="148"/>
    </location>
</feature>
<feature type="glycosylation site" description="N-linked (GlcNAc...) asparagine" evidence="2">
    <location>
        <position position="82"/>
    </location>
</feature>
<feature type="glycosylation site" description="N-linked (GlcNAc...) asparagine" evidence="2">
    <location>
        <position position="180"/>
    </location>
</feature>
<feature type="glycosylation site" description="N-linked (GlcNAc...) asparagine" evidence="2">
    <location>
        <position position="372"/>
    </location>
</feature>
<feature type="disulfide bond" evidence="1">
    <location>
        <begin position="60"/>
        <end position="355"/>
    </location>
</feature>
<feature type="disulfide bond" evidence="1">
    <location>
        <begin position="224"/>
        <end position="239"/>
    </location>
</feature>
<feature type="disulfide bond" evidence="1">
    <location>
        <begin position="380"/>
        <end position="391"/>
    </location>
</feature>
<feature type="disulfide bond" evidence="1">
    <location>
        <begin position="385"/>
        <end position="439"/>
    </location>
</feature>
<feature type="disulfide bond" evidence="1">
    <location>
        <begin position="441"/>
        <end position="468"/>
    </location>
</feature>
<comment type="function">
    <text>Involved in sperm-egg adhesion. Upon fertilization sperm must first penetrate a layer of cumulus cells that surrounds the egg before reaching the zona pellucida. The cumulus cells are embedded in a matrix containing hyaluronic acid which is formed prior to ovulation. This protein aids in penetrating the layer of cumulus cells by digesting hyaluronic acid.</text>
</comment>
<comment type="catalytic activity">
    <reaction>
        <text>Random hydrolysis of (1-&gt;4)-linkages between N-acetyl-beta-D-glucosamine and D-glucuronate residues in hyaluronate.</text>
        <dbReference type="EC" id="3.2.1.35"/>
    </reaction>
</comment>
<comment type="subcellular location">
    <subcellularLocation>
        <location>Cell membrane</location>
        <topology>Lipid-anchor</topology>
        <topology>GPI-anchor</topology>
    </subcellularLocation>
</comment>
<comment type="tissue specificity">
    <text>Testis.</text>
</comment>
<comment type="similarity">
    <text evidence="3">Belongs to the glycosyl hydrolase 56 family.</text>
</comment>
<organism>
    <name type="scientific">Oryctolagus cuniculus</name>
    <name type="common">Rabbit</name>
    <dbReference type="NCBI Taxonomy" id="9986"/>
    <lineage>
        <taxon>Eukaryota</taxon>
        <taxon>Metazoa</taxon>
        <taxon>Chordata</taxon>
        <taxon>Craniata</taxon>
        <taxon>Vertebrata</taxon>
        <taxon>Euteleostomi</taxon>
        <taxon>Mammalia</taxon>
        <taxon>Eutheria</taxon>
        <taxon>Euarchontoglires</taxon>
        <taxon>Glires</taxon>
        <taxon>Lagomorpha</taxon>
        <taxon>Leporidae</taxon>
        <taxon>Oryctolagus</taxon>
    </lineage>
</organism>